<dbReference type="EMBL" id="X59149">
    <property type="protein sequence ID" value="CAA41860.1"/>
    <property type="molecule type" value="mRNA"/>
</dbReference>
<dbReference type="PIR" id="S36126">
    <property type="entry name" value="S36126"/>
</dbReference>
<dbReference type="RefSeq" id="NP_059041.1">
    <property type="nucleotide sequence ID" value="NM_017345.1"/>
</dbReference>
<dbReference type="SMR" id="Q05695"/>
<dbReference type="BioGRID" id="248425">
    <property type="interactions" value="3"/>
</dbReference>
<dbReference type="FunCoup" id="Q05695">
    <property type="interactions" value="612"/>
</dbReference>
<dbReference type="STRING" id="10116.ENSRNOP00000075314"/>
<dbReference type="GlyCosmos" id="Q05695">
    <property type="glycosylation" value="19 sites, 17 glycans"/>
</dbReference>
<dbReference type="GlyGen" id="Q05695">
    <property type="glycosylation" value="19 sites, 17 N-linked glycans (7 sites), 4 N-linked;o-linked glycans (3 sites)"/>
</dbReference>
<dbReference type="iPTMnet" id="Q05695"/>
<dbReference type="PhosphoSitePlus" id="Q05695"/>
<dbReference type="SwissPalm" id="Q05695"/>
<dbReference type="jPOST" id="Q05695"/>
<dbReference type="PaxDb" id="10116-ENSRNOP00000053191"/>
<dbReference type="GeneID" id="50687"/>
<dbReference type="KEGG" id="rno:50687"/>
<dbReference type="AGR" id="RGD:619777"/>
<dbReference type="CTD" id="3897"/>
<dbReference type="RGD" id="619777">
    <property type="gene designation" value="L1cam"/>
</dbReference>
<dbReference type="eggNOG" id="KOG3513">
    <property type="taxonomic scope" value="Eukaryota"/>
</dbReference>
<dbReference type="InParanoid" id="Q05695"/>
<dbReference type="PhylomeDB" id="Q05695"/>
<dbReference type="Reactome" id="R-RNO-210991">
    <property type="pathway name" value="Basigin interactions"/>
</dbReference>
<dbReference type="Reactome" id="R-RNO-373760">
    <property type="pathway name" value="L1CAM interactions"/>
</dbReference>
<dbReference type="Reactome" id="R-RNO-437239">
    <property type="pathway name" value="Recycling pathway of L1"/>
</dbReference>
<dbReference type="Reactome" id="R-RNO-445095">
    <property type="pathway name" value="Interaction between L1 and Ankyrins"/>
</dbReference>
<dbReference type="Reactome" id="R-RNO-445144">
    <property type="pathway name" value="Signal transduction by L1"/>
</dbReference>
<dbReference type="PRO" id="PR:Q05695"/>
<dbReference type="Proteomes" id="UP000002494">
    <property type="component" value="Unplaced"/>
</dbReference>
<dbReference type="GO" id="GO:0030424">
    <property type="term" value="C:axon"/>
    <property type="evidence" value="ECO:0000314"/>
    <property type="project" value="RGD"/>
</dbReference>
<dbReference type="GO" id="GO:0044295">
    <property type="term" value="C:axonal growth cone"/>
    <property type="evidence" value="ECO:0000314"/>
    <property type="project" value="UniProtKB"/>
</dbReference>
<dbReference type="GO" id="GO:0009986">
    <property type="term" value="C:cell surface"/>
    <property type="evidence" value="ECO:0000314"/>
    <property type="project" value="RGD"/>
</dbReference>
<dbReference type="GO" id="GO:0030425">
    <property type="term" value="C:dendrite"/>
    <property type="evidence" value="ECO:0000314"/>
    <property type="project" value="RGD"/>
</dbReference>
<dbReference type="GO" id="GO:0044294">
    <property type="term" value="C:dendritic growth cone"/>
    <property type="evidence" value="ECO:0000314"/>
    <property type="project" value="RGD"/>
</dbReference>
<dbReference type="GO" id="GO:0005768">
    <property type="term" value="C:endosome"/>
    <property type="evidence" value="ECO:0000314"/>
    <property type="project" value="RGD"/>
</dbReference>
<dbReference type="GO" id="GO:0009897">
    <property type="term" value="C:external side of plasma membrane"/>
    <property type="evidence" value="ECO:0000266"/>
    <property type="project" value="RGD"/>
</dbReference>
<dbReference type="GO" id="GO:0098982">
    <property type="term" value="C:GABA-ergic synapse"/>
    <property type="evidence" value="ECO:0000266"/>
    <property type="project" value="RGD"/>
</dbReference>
<dbReference type="GO" id="GO:0098978">
    <property type="term" value="C:glutamatergic synapse"/>
    <property type="evidence" value="ECO:0000266"/>
    <property type="project" value="RGD"/>
</dbReference>
<dbReference type="GO" id="GO:0016020">
    <property type="term" value="C:membrane"/>
    <property type="evidence" value="ECO:0000266"/>
    <property type="project" value="RGD"/>
</dbReference>
<dbReference type="GO" id="GO:0043025">
    <property type="term" value="C:neuronal cell body"/>
    <property type="evidence" value="ECO:0000314"/>
    <property type="project" value="RGD"/>
</dbReference>
<dbReference type="GO" id="GO:0005886">
    <property type="term" value="C:plasma membrane"/>
    <property type="evidence" value="ECO:0000250"/>
    <property type="project" value="UniProtKB"/>
</dbReference>
<dbReference type="GO" id="GO:0042734">
    <property type="term" value="C:presynaptic membrane"/>
    <property type="evidence" value="ECO:0000266"/>
    <property type="project" value="RGD"/>
</dbReference>
<dbReference type="GO" id="GO:0098685">
    <property type="term" value="C:Schaffer collateral - CA1 synapse"/>
    <property type="evidence" value="ECO:0000314"/>
    <property type="project" value="SynGO"/>
</dbReference>
<dbReference type="GO" id="GO:0043195">
    <property type="term" value="C:terminal bouton"/>
    <property type="evidence" value="ECO:0000266"/>
    <property type="project" value="RGD"/>
</dbReference>
<dbReference type="GO" id="GO:0008046">
    <property type="term" value="F:axon guidance receptor activity"/>
    <property type="evidence" value="ECO:0000318"/>
    <property type="project" value="GO_Central"/>
</dbReference>
<dbReference type="GO" id="GO:0042802">
    <property type="term" value="F:identical protein binding"/>
    <property type="evidence" value="ECO:0000266"/>
    <property type="project" value="RGD"/>
</dbReference>
<dbReference type="GO" id="GO:0005178">
    <property type="term" value="F:integrin binding"/>
    <property type="evidence" value="ECO:0000266"/>
    <property type="project" value="RGD"/>
</dbReference>
<dbReference type="GO" id="GO:0030165">
    <property type="term" value="F:PDZ domain binding"/>
    <property type="evidence" value="ECO:0000353"/>
    <property type="project" value="RGD"/>
</dbReference>
<dbReference type="GO" id="GO:0019904">
    <property type="term" value="F:protein domain specific binding"/>
    <property type="evidence" value="ECO:0000266"/>
    <property type="project" value="RGD"/>
</dbReference>
<dbReference type="GO" id="GO:0033691">
    <property type="term" value="F:sialic acid binding"/>
    <property type="evidence" value="ECO:0000266"/>
    <property type="project" value="RGD"/>
</dbReference>
<dbReference type="GO" id="GO:0061564">
    <property type="term" value="P:axon development"/>
    <property type="evidence" value="ECO:0000250"/>
    <property type="project" value="UniProtKB"/>
</dbReference>
<dbReference type="GO" id="GO:0007411">
    <property type="term" value="P:axon guidance"/>
    <property type="evidence" value="ECO:0000250"/>
    <property type="project" value="UniProtKB"/>
</dbReference>
<dbReference type="GO" id="GO:0007413">
    <property type="term" value="P:axonal fasciculation"/>
    <property type="evidence" value="ECO:0000315"/>
    <property type="project" value="RGD"/>
</dbReference>
<dbReference type="GO" id="GO:0019722">
    <property type="term" value="P:calcium-mediated signaling"/>
    <property type="evidence" value="ECO:0000266"/>
    <property type="project" value="RGD"/>
</dbReference>
<dbReference type="GO" id="GO:0016477">
    <property type="term" value="P:cell migration"/>
    <property type="evidence" value="ECO:0000250"/>
    <property type="project" value="UniProtKB"/>
</dbReference>
<dbReference type="GO" id="GO:0007166">
    <property type="term" value="P:cell surface receptor signaling pathway"/>
    <property type="evidence" value="ECO:0000266"/>
    <property type="project" value="RGD"/>
</dbReference>
<dbReference type="GO" id="GO:0033631">
    <property type="term" value="P:cell-cell adhesion mediated by integrin"/>
    <property type="evidence" value="ECO:0000266"/>
    <property type="project" value="RGD"/>
</dbReference>
<dbReference type="GO" id="GO:0007160">
    <property type="term" value="P:cell-matrix adhesion"/>
    <property type="evidence" value="ECO:0000250"/>
    <property type="project" value="UniProtKB"/>
</dbReference>
<dbReference type="GO" id="GO:0071549">
    <property type="term" value="P:cellular response to dexamethasone stimulus"/>
    <property type="evidence" value="ECO:0000270"/>
    <property type="project" value="RGD"/>
</dbReference>
<dbReference type="GO" id="GO:0071361">
    <property type="term" value="P:cellular response to ethanol"/>
    <property type="evidence" value="ECO:0000270"/>
    <property type="project" value="RGD"/>
</dbReference>
<dbReference type="GO" id="GO:1990090">
    <property type="term" value="P:cellular response to nerve growth factor stimulus"/>
    <property type="evidence" value="ECO:0000270"/>
    <property type="project" value="RGD"/>
</dbReference>
<dbReference type="GO" id="GO:0097069">
    <property type="term" value="P:cellular response to thyroxine stimulus"/>
    <property type="evidence" value="ECO:0000270"/>
    <property type="project" value="RGD"/>
</dbReference>
<dbReference type="GO" id="GO:0071560">
    <property type="term" value="P:cellular response to transforming growth factor beta stimulus"/>
    <property type="evidence" value="ECO:0000270"/>
    <property type="project" value="RGD"/>
</dbReference>
<dbReference type="GO" id="GO:0098749">
    <property type="term" value="P:cerebellar neuron development"/>
    <property type="evidence" value="ECO:0000315"/>
    <property type="project" value="RGD"/>
</dbReference>
<dbReference type="GO" id="GO:0071542">
    <property type="term" value="P:dopaminergic neuron differentiation"/>
    <property type="evidence" value="ECO:0000270"/>
    <property type="project" value="RGD"/>
</dbReference>
<dbReference type="GO" id="GO:0007157">
    <property type="term" value="P:heterophilic cell-cell adhesion via plasma membrane cell adhesion molecules"/>
    <property type="evidence" value="ECO:0000266"/>
    <property type="project" value="RGD"/>
</dbReference>
<dbReference type="GO" id="GO:0007156">
    <property type="term" value="P:homophilic cell adhesion via plasma membrane adhesion molecules"/>
    <property type="evidence" value="ECO:0000266"/>
    <property type="project" value="RGD"/>
</dbReference>
<dbReference type="GO" id="GO:0034109">
    <property type="term" value="P:homotypic cell-cell adhesion"/>
    <property type="evidence" value="ECO:0000266"/>
    <property type="project" value="RGD"/>
</dbReference>
<dbReference type="GO" id="GO:0007159">
    <property type="term" value="P:leukocyte cell-cell adhesion"/>
    <property type="evidence" value="ECO:0000266"/>
    <property type="project" value="RGD"/>
</dbReference>
<dbReference type="GO" id="GO:0099558">
    <property type="term" value="P:maintenance of synapse structure"/>
    <property type="evidence" value="ECO:0000266"/>
    <property type="project" value="RGD"/>
</dbReference>
<dbReference type="GO" id="GO:0050804">
    <property type="term" value="P:modulation of chemical synaptic transmission"/>
    <property type="evidence" value="ECO:0000314"/>
    <property type="project" value="SynGO"/>
</dbReference>
<dbReference type="GO" id="GO:0030182">
    <property type="term" value="P:neuron differentiation"/>
    <property type="evidence" value="ECO:0000270"/>
    <property type="project" value="RGD"/>
</dbReference>
<dbReference type="GO" id="GO:0031175">
    <property type="term" value="P:neuron projection development"/>
    <property type="evidence" value="ECO:0000250"/>
    <property type="project" value="UniProtKB"/>
</dbReference>
<dbReference type="GO" id="GO:0045773">
    <property type="term" value="P:positive regulation of axon extension"/>
    <property type="evidence" value="ECO:0000315"/>
    <property type="project" value="UniProtKB"/>
</dbReference>
<dbReference type="GO" id="GO:0050850">
    <property type="term" value="P:positive regulation of calcium-mediated signaling"/>
    <property type="evidence" value="ECO:0000266"/>
    <property type="project" value="RGD"/>
</dbReference>
<dbReference type="GO" id="GO:0022409">
    <property type="term" value="P:positive regulation of cell-cell adhesion"/>
    <property type="evidence" value="ECO:0000266"/>
    <property type="project" value="RGD"/>
</dbReference>
<dbReference type="GO" id="GO:0010811">
    <property type="term" value="P:positive regulation of cell-substrate adhesion"/>
    <property type="evidence" value="ECO:0000314"/>
    <property type="project" value="RGD"/>
</dbReference>
<dbReference type="GO" id="GO:0044860">
    <property type="term" value="P:protein localization to plasma membrane raft"/>
    <property type="evidence" value="ECO:0000314"/>
    <property type="project" value="RGD"/>
</dbReference>
<dbReference type="GO" id="GO:0070372">
    <property type="term" value="P:regulation of ERK1 and ERK2 cascade"/>
    <property type="evidence" value="ECO:0000314"/>
    <property type="project" value="RGD"/>
</dbReference>
<dbReference type="GO" id="GO:0010975">
    <property type="term" value="P:regulation of neuron projection development"/>
    <property type="evidence" value="ECO:0000315"/>
    <property type="project" value="RGD"/>
</dbReference>
<dbReference type="GO" id="GO:0051963">
    <property type="term" value="P:regulation of synapse assembly"/>
    <property type="evidence" value="ECO:0000266"/>
    <property type="project" value="RGD"/>
</dbReference>
<dbReference type="GO" id="GO:0014823">
    <property type="term" value="P:response to activity"/>
    <property type="evidence" value="ECO:0000270"/>
    <property type="project" value="RGD"/>
</dbReference>
<dbReference type="GO" id="GO:0097066">
    <property type="term" value="P:response to thyroid hormone"/>
    <property type="evidence" value="ECO:0000270"/>
    <property type="project" value="RGD"/>
</dbReference>
<dbReference type="GO" id="GO:1901424">
    <property type="term" value="P:response to toluene"/>
    <property type="evidence" value="ECO:0000314"/>
    <property type="project" value="RGD"/>
</dbReference>
<dbReference type="GO" id="GO:0050808">
    <property type="term" value="P:synapse organization"/>
    <property type="evidence" value="ECO:0000250"/>
    <property type="project" value="UniProtKB"/>
</dbReference>
<dbReference type="CDD" id="cd00063">
    <property type="entry name" value="FN3"/>
    <property type="match status" value="4"/>
</dbReference>
<dbReference type="CDD" id="cd05876">
    <property type="entry name" value="Ig3_L1-CAM"/>
    <property type="match status" value="1"/>
</dbReference>
<dbReference type="CDD" id="cd05733">
    <property type="entry name" value="IgI_L1-CAM_like"/>
    <property type="match status" value="1"/>
</dbReference>
<dbReference type="FunFam" id="2.60.40.10:FF:000561">
    <property type="entry name" value="Neural cell adhesion molecule L1"/>
    <property type="match status" value="1"/>
</dbReference>
<dbReference type="FunFam" id="2.60.40.10:FF:000658">
    <property type="entry name" value="Neural cell adhesion molecule L1"/>
    <property type="match status" value="1"/>
</dbReference>
<dbReference type="FunFam" id="2.60.40.10:FF:000713">
    <property type="entry name" value="Neural cell adhesion molecule L1"/>
    <property type="match status" value="1"/>
</dbReference>
<dbReference type="FunFam" id="2.60.40.10:FF:000945">
    <property type="entry name" value="Neural cell adhesion molecule L1"/>
    <property type="match status" value="1"/>
</dbReference>
<dbReference type="FunFam" id="2.60.40.10:FF:000057">
    <property type="entry name" value="neural cell adhesion molecule L1"/>
    <property type="match status" value="1"/>
</dbReference>
<dbReference type="FunFam" id="2.60.40.10:FF:000063">
    <property type="entry name" value="neural cell adhesion molecule L1"/>
    <property type="match status" value="1"/>
</dbReference>
<dbReference type="FunFam" id="2.60.40.10:FF:000005">
    <property type="entry name" value="Neuronal cell adhesion molecule"/>
    <property type="match status" value="1"/>
</dbReference>
<dbReference type="FunFam" id="2.60.40.10:FF:000028">
    <property type="entry name" value="Neuronal cell adhesion molecule"/>
    <property type="match status" value="1"/>
</dbReference>
<dbReference type="FunFam" id="2.60.40.10:FF:000038">
    <property type="entry name" value="Neuronal cell adhesion molecule"/>
    <property type="match status" value="1"/>
</dbReference>
<dbReference type="FunFam" id="2.60.40.10:FF:000100">
    <property type="entry name" value="Neuronal cell adhesion molecule a"/>
    <property type="match status" value="1"/>
</dbReference>
<dbReference type="Gene3D" id="2.60.40.10">
    <property type="entry name" value="Immunoglobulins"/>
    <property type="match status" value="10"/>
</dbReference>
<dbReference type="InterPro" id="IPR003961">
    <property type="entry name" value="FN3_dom"/>
</dbReference>
<dbReference type="InterPro" id="IPR036116">
    <property type="entry name" value="FN3_sf"/>
</dbReference>
<dbReference type="InterPro" id="IPR007110">
    <property type="entry name" value="Ig-like_dom"/>
</dbReference>
<dbReference type="InterPro" id="IPR036179">
    <property type="entry name" value="Ig-like_dom_sf"/>
</dbReference>
<dbReference type="InterPro" id="IPR013783">
    <property type="entry name" value="Ig-like_fold"/>
</dbReference>
<dbReference type="InterPro" id="IPR013098">
    <property type="entry name" value="Ig_I-set"/>
</dbReference>
<dbReference type="InterPro" id="IPR003599">
    <property type="entry name" value="Ig_sub"/>
</dbReference>
<dbReference type="InterPro" id="IPR003598">
    <property type="entry name" value="Ig_sub2"/>
</dbReference>
<dbReference type="InterPro" id="IPR051170">
    <property type="entry name" value="Neural/epithelial_adhesion"/>
</dbReference>
<dbReference type="InterPro" id="IPR026966">
    <property type="entry name" value="Neurofascin/L1/NrCAM_C"/>
</dbReference>
<dbReference type="PANTHER" id="PTHR12231">
    <property type="entry name" value="CTX-RELATED TYPE I TRANSMEMBRANE PROTEIN"/>
    <property type="match status" value="1"/>
</dbReference>
<dbReference type="PANTHER" id="PTHR12231:SF241">
    <property type="entry name" value="L1 CELL ADHESION MOLECULE"/>
    <property type="match status" value="1"/>
</dbReference>
<dbReference type="Pfam" id="PF13882">
    <property type="entry name" value="Bravo_FIGEY"/>
    <property type="match status" value="1"/>
</dbReference>
<dbReference type="Pfam" id="PF00041">
    <property type="entry name" value="fn3"/>
    <property type="match status" value="4"/>
</dbReference>
<dbReference type="Pfam" id="PF07679">
    <property type="entry name" value="I-set"/>
    <property type="match status" value="4"/>
</dbReference>
<dbReference type="Pfam" id="PF13927">
    <property type="entry name" value="Ig_3"/>
    <property type="match status" value="1"/>
</dbReference>
<dbReference type="SMART" id="SM00060">
    <property type="entry name" value="FN3"/>
    <property type="match status" value="4"/>
</dbReference>
<dbReference type="SMART" id="SM00409">
    <property type="entry name" value="IG"/>
    <property type="match status" value="6"/>
</dbReference>
<dbReference type="SMART" id="SM00408">
    <property type="entry name" value="IGc2"/>
    <property type="match status" value="5"/>
</dbReference>
<dbReference type="SUPFAM" id="SSF49265">
    <property type="entry name" value="Fibronectin type III"/>
    <property type="match status" value="3"/>
</dbReference>
<dbReference type="SUPFAM" id="SSF48726">
    <property type="entry name" value="Immunoglobulin"/>
    <property type="match status" value="6"/>
</dbReference>
<dbReference type="PROSITE" id="PS50853">
    <property type="entry name" value="FN3"/>
    <property type="match status" value="5"/>
</dbReference>
<dbReference type="PROSITE" id="PS50835">
    <property type="entry name" value="IG_LIKE"/>
    <property type="match status" value="6"/>
</dbReference>
<reference key="1">
    <citation type="journal article" date="1991" name="FEBS Lett.">
        <title>Molecular cloning of cDNA encoding the rat neural cell adhesion molecule L1. Two L1 isoforms in the cytoplasmic region are produced by differential splicing.</title>
        <authorList>
            <person name="Miura M."/>
            <person name="Kobayashi M."/>
            <person name="Asou H."/>
            <person name="Uyemura K."/>
        </authorList>
    </citation>
    <scope>NUCLEOTIDE SEQUENCE [MRNA] (ISOFORMS 1 AND 2)</scope>
    <scope>SUBCELLULAR LOCATION</scope>
</reference>
<reference key="2">
    <citation type="journal article" date="1989" name="J. Neurosci.">
        <title>Characterization of a partial cDNA clone for the NILE glycoprotein and identification of the encoded polypeptide domain.</title>
        <authorList>
            <person name="Prince J.T."/>
            <person name="Milona N."/>
            <person name="Stallcup W.B."/>
        </authorList>
    </citation>
    <scope>NUCLEOTIDE SEQUENCE [MRNA] OF 1159-1237</scope>
</reference>
<reference key="3">
    <citation type="journal article" date="1989" name="J. Neurosci.">
        <authorList>
            <person name="Prince J.T."/>
            <person name="Milona N."/>
            <person name="Stallcup W.B."/>
        </authorList>
    </citation>
    <scope>ERRATUM OF PUBMED:2466966</scope>
</reference>
<reference key="4">
    <citation type="journal article" date="2008" name="J. Cell Biol.">
        <title>Shootin1 interacts with actin retrograde flow and L1-CAM to promote axon outgrowth.</title>
        <authorList>
            <person name="Shimada T."/>
            <person name="Toriyama M."/>
            <person name="Uemura K."/>
            <person name="Kamiguchi H."/>
            <person name="Sugiura T."/>
            <person name="Watanabe N."/>
            <person name="Inagaki N."/>
        </authorList>
    </citation>
    <scope>INTERACTION WITH SHTN1</scope>
    <scope>SUBCELLULAR LOCATION</scope>
</reference>
<reference key="5">
    <citation type="journal article" date="2012" name="Nat. Commun.">
        <title>Quantitative maps of protein phosphorylation sites across 14 different rat organs and tissues.</title>
        <authorList>
            <person name="Lundby A."/>
            <person name="Secher A."/>
            <person name="Lage K."/>
            <person name="Nordsborg N.B."/>
            <person name="Dmytriyev A."/>
            <person name="Lundby C."/>
            <person name="Olsen J.V."/>
        </authorList>
    </citation>
    <scope>PHOSPHORYLATION [LARGE SCALE ANALYSIS] AT SER-1180; SER-1183; SER-1196; SER-1245 AND SER-1246</scope>
    <scope>PHOSPHORYLATION [LARGE SCALE ANALYSIS] AT SER-1179 (ISOFORM 2)</scope>
    <scope>IDENTIFICATION BY MASS SPECTROMETRY [LARGE SCALE ANALYSIS]</scope>
</reference>
<reference key="6">
    <citation type="journal article" date="2013" name="J. Proteome Res.">
        <title>Site-specific glycan-peptide analysis for determination of N-glycoproteome heterogeneity.</title>
        <authorList>
            <person name="Parker B.L."/>
            <person name="Thaysen-Andersen M."/>
            <person name="Solis N."/>
            <person name="Scott N.E."/>
            <person name="Larsen M.R."/>
            <person name="Graham M.E."/>
            <person name="Packer N.H."/>
            <person name="Cordwell S.J."/>
        </authorList>
    </citation>
    <scope>GLYCOSYLATION [LARGE SCALE ANALYSIS] AT ASN-202; ASN-670; ASN-725; ASN-978 AND ASN-1072</scope>
    <scope>IDENTIFICATION BY MASS SPECTROMETRY [LARGE SCALE ANALYSIS]</scope>
    <source>
        <tissue>Brain</tissue>
    </source>
</reference>
<sequence>MVMMLWYVLPLLLCSPCLLIQIPDEYKGHHVLEPPVITEQSPRRLVVFPTDDISLKCEARGRPQVEFRWTKDGIHFKPKEELGVVVHEAPYSGSFTIEGNNSFAQRFQGIYRCYASNNLGTAMSHEIQLVAEGAPKWPKETVKPVEVEEGESVVLPCNPPPSAAPLRIYWMNSKILHIKQDERVSMGQNGDLYFANVLTSDNHSDYICNAHFPGTRTIIQKEPIDLRVKPTNSMIDRKPRLLFPTNSSSHLVALQGQSLILECIAEGFPTPTIKWLHPSDPMPTDRVIYQNHNKTLQLLNVGEEDDGEYTCLAENSLGSARHAYYVTVEAAPYWLQKPQSHLYGPGETARLDCQVQGRPQPEVTWRINGMSIEKVNKDQKYRIEQGSLILSNVQPSDTMVTQCEARNQHGLLLANAYIYVVQLPARILTKDNQTYMAVEGSTAYLLCKAFGAPVPSVQWLDEEGTTVLQDERFFPYANGHLGIRDLQANDTGRYFCQAANDQNNVTILANLQVKEATQITQGPRSTIEKKGARVTFTCQASFDPSLQASITWRGDGRDLQERGDSDKYFIEDGQLVIKSLDYSDQGDYSCVASTELDEVESRAQLLVVGSPGPVPHLELSDRHLLKQSQVHLSWSPAEDHNSPIEKYDIEFEDKEMAPEKWFSLGKVPGNQTSTTLKLSPYVHYTFRVTAINKYGPGEPSPVSETVVTPEAAPEKNPVDVRGEGNETNNMVITWKPLRWMDWNAPQIQYRVQWRPLGKQETWKEQTVSDPFLVVSNTSTFVPYEIKVQAVNNQGKGPEPQVTIGYSGEDYPQVSPELEDITIFNSSTVLVRWRPVDLAQVKGHLRGYNVTYWWKGSQRKHSKRHVHKSHMVVPANTTSAILSGLRPYSSYHVEVQAFNGRGLGPASEWTFSTPEGVPGHPEALHLECQSDTSLLLHWQPPLSHNGVLTGYLLSYHPLDGESKEQLFFNLSDPELRTHNLTNLNPDLQYRFQLQATTHQGPGEAIVREGGTMALFGKPDFGNISVTAGENYSVVSWVPREGQCNFRFHILFKALPEGKVSPDHQPQPQYVSYNQSSYTQWDLQPDTKYEIHLMREKVLLHHLAVKTNGTGPVRVSTTGSFASEGWFIAFVSAIILLLLILLILCFIKRSKGGKYSVKDKEDTQVDSEARPMKDETFGEYRSLESDNEEKAFGSSQPSLNGDIKPLGSDDSLADYGGSVDVQFNEDGSFIGQYSGKKEKEAAGGNDSSGATSPINPAVALE</sequence>
<gene>
    <name type="primary">L1cam</name>
    <name type="synonym">Caml1</name>
</gene>
<organism>
    <name type="scientific">Rattus norvegicus</name>
    <name type="common">Rat</name>
    <dbReference type="NCBI Taxonomy" id="10116"/>
    <lineage>
        <taxon>Eukaryota</taxon>
        <taxon>Metazoa</taxon>
        <taxon>Chordata</taxon>
        <taxon>Craniata</taxon>
        <taxon>Vertebrata</taxon>
        <taxon>Euteleostomi</taxon>
        <taxon>Mammalia</taxon>
        <taxon>Eutheria</taxon>
        <taxon>Euarchontoglires</taxon>
        <taxon>Glires</taxon>
        <taxon>Rodentia</taxon>
        <taxon>Myomorpha</taxon>
        <taxon>Muroidea</taxon>
        <taxon>Muridae</taxon>
        <taxon>Murinae</taxon>
        <taxon>Rattus</taxon>
    </lineage>
</organism>
<protein>
    <recommendedName>
        <fullName>Neural cell adhesion molecule L1</fullName>
        <shortName>N-CAM-L1</shortName>
        <shortName>NCAM-L1</shortName>
    </recommendedName>
    <alternativeName>
        <fullName>Nerve-growth factor-inducible large external glycoprotein</fullName>
        <shortName>NILE</shortName>
    </alternativeName>
    <cdAntigenName>CD171</cdAntigenName>
</protein>
<evidence type="ECO:0000250" key="1"/>
<evidence type="ECO:0000250" key="2">
    <source>
        <dbReference type="UniProtKB" id="P11627"/>
    </source>
</evidence>
<evidence type="ECO:0000250" key="3">
    <source>
        <dbReference type="UniProtKB" id="P32004"/>
    </source>
</evidence>
<evidence type="ECO:0000255" key="4"/>
<evidence type="ECO:0000255" key="5">
    <source>
        <dbReference type="PROSITE-ProRule" id="PRU00114"/>
    </source>
</evidence>
<evidence type="ECO:0000255" key="6">
    <source>
        <dbReference type="PROSITE-ProRule" id="PRU00316"/>
    </source>
</evidence>
<evidence type="ECO:0000256" key="7">
    <source>
        <dbReference type="SAM" id="MobiDB-lite"/>
    </source>
</evidence>
<evidence type="ECO:0000269" key="8">
    <source>
    </source>
</evidence>
<evidence type="ECO:0000303" key="9">
    <source>
    </source>
</evidence>
<evidence type="ECO:0000305" key="10"/>
<evidence type="ECO:0000305" key="11">
    <source>
    </source>
</evidence>
<evidence type="ECO:0007744" key="12">
    <source>
    </source>
</evidence>
<evidence type="ECO:0007744" key="13">
    <source>
    </source>
</evidence>
<comment type="function">
    <text evidence="3">Neural cell adhesion molecule involved in the dynamics of cell adhesion and in the generation of transmembrane signals at tyrosine kinase receptors. During brain development, critical in multiple processes, including neuronal migration, axonal growth and fasciculation, and synaptogenesis. In the mature brain, plays a role in the dynamics of neuronal structure and function, including synaptic plasticity.</text>
</comment>
<comment type="subunit">
    <text evidence="2 8">Interacts with SHTN1; the interaction occurs in axonal growth cones (PubMed:18519736). Interacts with isoform 2 of BSG (By similarity).</text>
</comment>
<comment type="subcellular location">
    <subcellularLocation>
        <location evidence="11">Cell membrane</location>
        <topology evidence="11">Single-pass type I membrane protein</topology>
    </subcellularLocation>
    <subcellularLocation>
        <location evidence="8">Cell projection</location>
        <location evidence="8">Growth cone</location>
    </subcellularLocation>
    <text evidence="8">Colocalized with SHTN1 in close apposition with actin filaments in filopodia and lamellipodia of axonal growth cones of hippocampal neurons (PubMed:18519736).</text>
</comment>
<comment type="alternative products">
    <event type="alternative splicing"/>
    <isoform>
        <id>Q05695-1</id>
        <name>1</name>
        <sequence type="displayed"/>
    </isoform>
    <isoform>
        <id>Q05695-2</id>
        <name>2</name>
        <name>L1cs</name>
        <sequence type="described" ref="VSP_002592"/>
    </isoform>
</comment>
<comment type="tissue specificity">
    <text>Isoform 2 is predominantly found in the brain, while isoform 1 is found in the peripheral nervous system.</text>
</comment>
<comment type="similarity">
    <text evidence="10">Belongs to the immunoglobulin superfamily. L1/neurofascin/NgCAM family.</text>
</comment>
<feature type="signal peptide" evidence="1">
    <location>
        <begin position="1"/>
        <end position="19"/>
    </location>
</feature>
<feature type="chain" id="PRO_0000015024" description="Neural cell adhesion molecule L1">
    <location>
        <begin position="20"/>
        <end position="1259"/>
    </location>
</feature>
<feature type="topological domain" description="Extracellular" evidence="4">
    <location>
        <begin position="20"/>
        <end position="1122"/>
    </location>
</feature>
<feature type="transmembrane region" description="Helical" evidence="4">
    <location>
        <begin position="1123"/>
        <end position="1145"/>
    </location>
</feature>
<feature type="topological domain" description="Cytoplasmic" evidence="4">
    <location>
        <begin position="1146"/>
        <end position="1259"/>
    </location>
</feature>
<feature type="domain" description="Ig-like C2-type 1">
    <location>
        <begin position="35"/>
        <end position="128"/>
    </location>
</feature>
<feature type="domain" description="Ig-like C2-type 2">
    <location>
        <begin position="138"/>
        <end position="225"/>
    </location>
</feature>
<feature type="domain" description="Ig-like C2-type 3">
    <location>
        <begin position="239"/>
        <end position="327"/>
    </location>
</feature>
<feature type="domain" description="Ig-like C2-type 4">
    <location>
        <begin position="332"/>
        <end position="419"/>
    </location>
</feature>
<feature type="domain" description="Ig-like C2-type 5">
    <location>
        <begin position="424"/>
        <end position="506"/>
    </location>
</feature>
<feature type="domain" description="Ig-like C2-type 6">
    <location>
        <begin position="517"/>
        <end position="600"/>
    </location>
</feature>
<feature type="domain" description="Fibronectin type-III 1" evidence="6">
    <location>
        <begin position="613"/>
        <end position="711"/>
    </location>
</feature>
<feature type="domain" description="Fibronectin type-III 2" evidence="6">
    <location>
        <begin position="716"/>
        <end position="809"/>
    </location>
</feature>
<feature type="domain" description="Fibronectin type-III 3" evidence="6">
    <location>
        <begin position="811"/>
        <end position="916"/>
    </location>
</feature>
<feature type="domain" description="Fibronectin type-III 4" evidence="6">
    <location>
        <begin position="919"/>
        <end position="1014"/>
    </location>
</feature>
<feature type="domain" description="Fibronectin type-III 5" evidence="6">
    <location>
        <begin position="1016"/>
        <end position="1116"/>
    </location>
</feature>
<feature type="region of interest" description="Disordered" evidence="7">
    <location>
        <begin position="697"/>
        <end position="724"/>
    </location>
</feature>
<feature type="region of interest" description="Disordered" evidence="7">
    <location>
        <begin position="1182"/>
        <end position="1209"/>
    </location>
</feature>
<feature type="region of interest" description="Disordered" evidence="7">
    <location>
        <begin position="1228"/>
        <end position="1259"/>
    </location>
</feature>
<feature type="short sequence motif" description="Cell attachment site" evidence="4">
    <location>
        <begin position="553"/>
        <end position="555"/>
    </location>
</feature>
<feature type="short sequence motif" description="Cell attachment site" evidence="4">
    <location>
        <begin position="562"/>
        <end position="564"/>
    </location>
</feature>
<feature type="compositionally biased region" description="Basic and acidic residues" evidence="7">
    <location>
        <begin position="712"/>
        <end position="724"/>
    </location>
</feature>
<feature type="compositionally biased region" description="Polar residues" evidence="7">
    <location>
        <begin position="1243"/>
        <end position="1252"/>
    </location>
</feature>
<feature type="modified residue" description="Phosphoserine" evidence="3">
    <location>
        <position position="1165"/>
    </location>
</feature>
<feature type="modified residue" description="Phosphoserine" evidence="12">
    <location>
        <position position="1180"/>
    </location>
</feature>
<feature type="modified residue" description="Phosphoserine" evidence="12">
    <location>
        <position position="1183"/>
    </location>
</feature>
<feature type="modified residue" description="Phosphoserine" evidence="12">
    <location>
        <position position="1196"/>
    </location>
</feature>
<feature type="modified residue" description="Phosphoserine" evidence="12">
    <location>
        <position position="1245"/>
    </location>
</feature>
<feature type="modified residue" description="Phosphoserine" evidence="12">
    <location>
        <position position="1246"/>
    </location>
</feature>
<feature type="modified residue" description="Phosphoserine" evidence="3">
    <location>
        <position position="1250"/>
    </location>
</feature>
<feature type="glycosylation site" description="N-linked (GlcNAc...) asparagine" evidence="4">
    <location>
        <position position="100"/>
    </location>
</feature>
<feature type="glycosylation site" description="N-linked (GlcNAc...) asparagine" evidence="13">
    <location>
        <position position="202"/>
    </location>
</feature>
<feature type="glycosylation site" description="N-linked (GlcNAc...) asparagine" evidence="4">
    <location>
        <position position="246"/>
    </location>
</feature>
<feature type="glycosylation site" description="N-linked (GlcNAc...) asparagine" evidence="4">
    <location>
        <position position="293"/>
    </location>
</feature>
<feature type="glycosylation site" description="N-linked (GlcNAc...) asparagine" evidence="4">
    <location>
        <position position="432"/>
    </location>
</feature>
<feature type="glycosylation site" description="N-linked (GlcNAc...) asparagine" evidence="4">
    <location>
        <position position="489"/>
    </location>
</feature>
<feature type="glycosylation site" description="N-linked (GlcNAc...) asparagine" evidence="4">
    <location>
        <position position="504"/>
    </location>
</feature>
<feature type="glycosylation site" description="N-linked (GlcNAc...) asparagine" evidence="13">
    <location>
        <position position="670"/>
    </location>
</feature>
<feature type="glycosylation site" description="N-linked (GlcNAc...) asparagine" evidence="13">
    <location>
        <position position="725"/>
    </location>
</feature>
<feature type="glycosylation site" description="N-linked (GlcNAc...) asparagine" evidence="4">
    <location>
        <position position="776"/>
    </location>
</feature>
<feature type="glycosylation site" description="N-linked (GlcNAc...) asparagine" evidence="4">
    <location>
        <position position="824"/>
    </location>
</feature>
<feature type="glycosylation site" description="N-linked (GlcNAc...) asparagine" evidence="4">
    <location>
        <position position="848"/>
    </location>
</feature>
<feature type="glycosylation site" description="N-linked (GlcNAc...) asparagine" evidence="4">
    <location>
        <position position="875"/>
    </location>
</feature>
<feature type="glycosylation site" description="N-linked (GlcNAc...) asparagine" evidence="4">
    <location>
        <position position="968"/>
    </location>
</feature>
<feature type="glycosylation site" description="N-linked (GlcNAc...) asparagine" evidence="13">
    <location>
        <position position="978"/>
    </location>
</feature>
<feature type="glycosylation site" description="N-linked (GlcNAc...) asparagine" evidence="4">
    <location>
        <position position="1021"/>
    </location>
</feature>
<feature type="glycosylation site" description="N-linked (GlcNAc...) asparagine" evidence="4">
    <location>
        <position position="1029"/>
    </location>
</feature>
<feature type="glycosylation site" description="N-linked (GlcNAc...) asparagine" evidence="13">
    <location>
        <position position="1072"/>
    </location>
</feature>
<feature type="glycosylation site" description="N-linked (GlcNAc...) asparagine" evidence="4">
    <location>
        <position position="1106"/>
    </location>
</feature>
<feature type="disulfide bond" evidence="5">
    <location>
        <begin position="57"/>
        <end position="113"/>
    </location>
</feature>
<feature type="disulfide bond" evidence="5">
    <location>
        <begin position="157"/>
        <end position="208"/>
    </location>
</feature>
<feature type="disulfide bond" evidence="5">
    <location>
        <begin position="263"/>
        <end position="311"/>
    </location>
</feature>
<feature type="disulfide bond" evidence="5">
    <location>
        <begin position="353"/>
        <end position="403"/>
    </location>
</feature>
<feature type="disulfide bond" evidence="5">
    <location>
        <begin position="447"/>
        <end position="496"/>
    </location>
</feature>
<feature type="disulfide bond" evidence="5">
    <location>
        <begin position="538"/>
        <end position="590"/>
    </location>
</feature>
<feature type="splice variant" id="VSP_002592" description="In isoform 2." evidence="9">
    <location>
        <begin position="1179"/>
        <end position="1182"/>
    </location>
</feature>
<feature type="sequence conflict" description="In Ref. 2." evidence="10" ref="2">
    <original>D</original>
    <variation>G</variation>
    <location>
        <position position="1200"/>
    </location>
</feature>
<feature type="sequence conflict" description="In Ref. 2." evidence="10" ref="2">
    <original>E</original>
    <variation>K</variation>
    <location>
        <position position="1236"/>
    </location>
</feature>
<feature type="modified residue" description="Phosphoserine" evidence="12">
    <location sequence="Q05695-2">
        <position position="1179"/>
    </location>
</feature>
<accession>Q05695</accession>
<name>L1CAM_RAT</name>
<proteinExistence type="evidence at protein level"/>
<keyword id="KW-0025">Alternative splicing</keyword>
<keyword id="KW-0130">Cell adhesion</keyword>
<keyword id="KW-1003">Cell membrane</keyword>
<keyword id="KW-0966">Cell projection</keyword>
<keyword id="KW-0217">Developmental protein</keyword>
<keyword id="KW-0221">Differentiation</keyword>
<keyword id="KW-1015">Disulfide bond</keyword>
<keyword id="KW-0325">Glycoprotein</keyword>
<keyword id="KW-0393">Immunoglobulin domain</keyword>
<keyword id="KW-0472">Membrane</keyword>
<keyword id="KW-0524">Neurogenesis</keyword>
<keyword id="KW-0597">Phosphoprotein</keyword>
<keyword id="KW-1185">Reference proteome</keyword>
<keyword id="KW-0677">Repeat</keyword>
<keyword id="KW-0732">Signal</keyword>
<keyword id="KW-0812">Transmembrane</keyword>
<keyword id="KW-1133">Transmembrane helix</keyword>